<evidence type="ECO:0000255" key="1">
    <source>
        <dbReference type="HAMAP-Rule" id="MF_00368"/>
    </source>
</evidence>
<evidence type="ECO:0000305" key="2"/>
<name>RK12_PROWI</name>
<keyword id="KW-0934">Plastid</keyword>
<keyword id="KW-0687">Ribonucleoprotein</keyword>
<keyword id="KW-0689">Ribosomal protein</keyword>
<sequence length="130" mass="14135">MSATTLEILEKLKAITLLEATELVSQIEKTFGVDASAPAVSGLRPILVEPIKQEDIIEEKTTFDVILEEVPSDKRVPILKVIRALTSLDLKQAKESITDLPKTILQGVSKEESEAAKQQLEAVGGKIKVS</sequence>
<comment type="function">
    <text evidence="1">Forms part of the ribosomal stalk which helps the ribosome interact with GTP-bound translation factors. Is thus essential for accurate translation.</text>
</comment>
<comment type="subunit">
    <text evidence="1">Homodimer. Part of the ribosomal stalk of the 50S ribosomal subunit. Forms a multimeric L10(L12)X complex, where L10 forms an elongated spine to which 2 to 4 L12 dimers bind in a sequential fashion. Binds GTP-bound translation factors.</text>
</comment>
<comment type="subcellular location">
    <subcellularLocation>
        <location>Plastid</location>
    </subcellularLocation>
</comment>
<comment type="similarity">
    <text evidence="1">Belongs to the bacterial ribosomal protein bL12 family.</text>
</comment>
<comment type="sequence caution" evidence="2">
    <conflict type="erroneous initiation">
        <sequence resource="EMBL-CDS" id="CAB38448"/>
    </conflict>
</comment>
<proteinExistence type="inferred from homology"/>
<gene>
    <name evidence="1" type="primary">rpl12</name>
</gene>
<feature type="chain" id="PRO_0000157623" description="Large ribosomal subunit protein bL12c">
    <location>
        <begin position="1"/>
        <end position="130"/>
    </location>
</feature>
<geneLocation type="non-photosynthetic plastid"/>
<protein>
    <recommendedName>
        <fullName evidence="2">Large ribosomal subunit protein bL12c</fullName>
    </recommendedName>
    <alternativeName>
        <fullName>50S ribosomal protein L12, plastid</fullName>
    </alternativeName>
</protein>
<accession>O99010</accession>
<organism>
    <name type="scientific">Prototheca wickerhamii</name>
    <dbReference type="NCBI Taxonomy" id="3111"/>
    <lineage>
        <taxon>Eukaryota</taxon>
        <taxon>Viridiplantae</taxon>
        <taxon>Chlorophyta</taxon>
        <taxon>core chlorophytes</taxon>
        <taxon>Trebouxiophyceae</taxon>
        <taxon>Chlorellales</taxon>
        <taxon>Chlorellaceae</taxon>
        <taxon>Prototheca</taxon>
    </lineage>
</organism>
<reference key="1">
    <citation type="journal article" date="2002" name="Mol. Genet. Genomics">
        <title>The genes encoding subunits of ATP synthase are conserved in the reduced plastid genome of the heterotrophic alga Prototheca wickerhamii.</title>
        <authorList>
            <person name="Knauf U."/>
            <person name="Hachtel W."/>
        </authorList>
    </citation>
    <scope>NUCLEOTIDE SEQUENCE [GENOMIC DNA]</scope>
    <source>
        <strain>263-11</strain>
    </source>
</reference>
<dbReference type="EMBL" id="AJ236874">
    <property type="protein sequence ID" value="CAB38448.1"/>
    <property type="status" value="ALT_INIT"/>
    <property type="molecule type" value="Genomic_DNA"/>
</dbReference>
<dbReference type="SMR" id="O99010"/>
<dbReference type="GO" id="GO:0009536">
    <property type="term" value="C:plastid"/>
    <property type="evidence" value="ECO:0007669"/>
    <property type="project" value="UniProtKB-SubCell"/>
</dbReference>
<dbReference type="GO" id="GO:1990904">
    <property type="term" value="C:ribonucleoprotein complex"/>
    <property type="evidence" value="ECO:0007669"/>
    <property type="project" value="UniProtKB-KW"/>
</dbReference>
<dbReference type="GO" id="GO:0005840">
    <property type="term" value="C:ribosome"/>
    <property type="evidence" value="ECO:0007669"/>
    <property type="project" value="UniProtKB-KW"/>
</dbReference>
<dbReference type="GO" id="GO:0003729">
    <property type="term" value="F:mRNA binding"/>
    <property type="evidence" value="ECO:0007669"/>
    <property type="project" value="TreeGrafter"/>
</dbReference>
<dbReference type="GO" id="GO:0003735">
    <property type="term" value="F:structural constituent of ribosome"/>
    <property type="evidence" value="ECO:0007669"/>
    <property type="project" value="InterPro"/>
</dbReference>
<dbReference type="GO" id="GO:0006412">
    <property type="term" value="P:translation"/>
    <property type="evidence" value="ECO:0007669"/>
    <property type="project" value="InterPro"/>
</dbReference>
<dbReference type="CDD" id="cd00387">
    <property type="entry name" value="Ribosomal_L7_L12"/>
    <property type="match status" value="1"/>
</dbReference>
<dbReference type="FunFam" id="3.30.1390.10:FF:000001">
    <property type="entry name" value="50S ribosomal protein L7/L12"/>
    <property type="match status" value="1"/>
</dbReference>
<dbReference type="Gene3D" id="3.30.1390.10">
    <property type="match status" value="1"/>
</dbReference>
<dbReference type="Gene3D" id="1.20.5.710">
    <property type="entry name" value="Single helix bin"/>
    <property type="match status" value="1"/>
</dbReference>
<dbReference type="HAMAP" id="MF_00368">
    <property type="entry name" value="Ribosomal_bL12"/>
    <property type="match status" value="1"/>
</dbReference>
<dbReference type="InterPro" id="IPR000206">
    <property type="entry name" value="Ribosomal_bL12"/>
</dbReference>
<dbReference type="InterPro" id="IPR013823">
    <property type="entry name" value="Ribosomal_bL12_C"/>
</dbReference>
<dbReference type="InterPro" id="IPR014719">
    <property type="entry name" value="Ribosomal_bL12_C/ClpS-like"/>
</dbReference>
<dbReference type="InterPro" id="IPR008932">
    <property type="entry name" value="Ribosomal_bL12_oligo"/>
</dbReference>
<dbReference type="InterPro" id="IPR036235">
    <property type="entry name" value="Ribosomal_bL12_oligo_N_sf"/>
</dbReference>
<dbReference type="NCBIfam" id="TIGR00855">
    <property type="entry name" value="L12"/>
    <property type="match status" value="1"/>
</dbReference>
<dbReference type="PANTHER" id="PTHR45987">
    <property type="entry name" value="39S RIBOSOMAL PROTEIN L12"/>
    <property type="match status" value="1"/>
</dbReference>
<dbReference type="PANTHER" id="PTHR45987:SF4">
    <property type="entry name" value="LARGE RIBOSOMAL SUBUNIT PROTEIN BL12M"/>
    <property type="match status" value="1"/>
</dbReference>
<dbReference type="Pfam" id="PF00542">
    <property type="entry name" value="Ribosomal_L12"/>
    <property type="match status" value="1"/>
</dbReference>
<dbReference type="Pfam" id="PF16320">
    <property type="entry name" value="Ribosomal_L12_N"/>
    <property type="match status" value="1"/>
</dbReference>
<dbReference type="SUPFAM" id="SSF54736">
    <property type="entry name" value="ClpS-like"/>
    <property type="match status" value="1"/>
</dbReference>
<dbReference type="SUPFAM" id="SSF48300">
    <property type="entry name" value="Ribosomal protein L7/12, oligomerisation (N-terminal) domain"/>
    <property type="match status" value="1"/>
</dbReference>